<reference key="1">
    <citation type="submission" date="2014-03" db="EMBL/GenBank/DDBJ databases">
        <authorList>
            <person name="Warren W."/>
            <person name="Wilson R.K."/>
        </authorList>
    </citation>
    <scope>NUCLEOTIDE SEQUENCE [LARGE SCALE GENOMIC DNA]</scope>
</reference>
<reference key="2">
    <citation type="unpublished observations" date="2019-04">
        <authorList>
            <person name="Puppione D.L."/>
        </authorList>
    </citation>
    <scope>IDENTIFICATION</scope>
</reference>
<feature type="signal peptide" evidence="2">
    <location>
        <begin position="1"/>
        <end position="17"/>
    </location>
</feature>
<feature type="chain" id="PRO_0000447440" description="Proapolipoprotein C-II">
    <location>
        <begin position="18"/>
        <end position="101"/>
    </location>
</feature>
<feature type="chain" id="PRO_0000447441" description="Apolipoprotein C-II" evidence="1">
    <location>
        <begin position="29"/>
        <end position="101"/>
    </location>
</feature>
<feature type="region of interest" description="Lipid binding" evidence="1">
    <location>
        <begin position="66"/>
        <end position="74"/>
    </location>
</feature>
<feature type="region of interest" description="Lipoprotein lipase cofactor" evidence="1">
    <location>
        <begin position="78"/>
        <end position="101"/>
    </location>
</feature>
<gene>
    <name type="primary">APOC2</name>
</gene>
<comment type="function">
    <text evidence="1">Component of chylomicrons, very low-density lipoproteins (VLDL), low-density lipoproteins (LDL), and high-density lipoproteins (HDL) in plasma. Plays an important role in lipoprotein metabolism as an activator of lipoprotein lipase. Both proapolipoprotein C-II and apolipoprotein C-II can activate lipoprotein lipase.</text>
</comment>
<comment type="subcellular location">
    <subcellularLocation>
        <location evidence="1">Secreted</location>
    </subcellularLocation>
</comment>
<comment type="PTM">
    <text evidence="1">Proapolipoprotein C-II is synthesized as a sialic acid containing glycoprotein which is subsequently desialylated prior to its proteolytic processing.</text>
</comment>
<comment type="PTM">
    <text evidence="1">Proapolipoprotein C-II, the major form found in plasma undergoes proteolytic cleavage of its N-terminal hexapeptide to generate apolipoprotein C-II, which occurs as the minor form in plasma.</text>
</comment>
<comment type="similarity">
    <text evidence="3">Belongs to the apolipoprotein C2 family.</text>
</comment>
<organism>
    <name type="scientific">Chlorocebus sabaeus</name>
    <name type="common">Green monkey</name>
    <name type="synonym">Simia sabaea</name>
    <dbReference type="NCBI Taxonomy" id="60711"/>
    <lineage>
        <taxon>Eukaryota</taxon>
        <taxon>Metazoa</taxon>
        <taxon>Chordata</taxon>
        <taxon>Craniata</taxon>
        <taxon>Vertebrata</taxon>
        <taxon>Euteleostomi</taxon>
        <taxon>Mammalia</taxon>
        <taxon>Eutheria</taxon>
        <taxon>Euarchontoglires</taxon>
        <taxon>Primates</taxon>
        <taxon>Haplorrhini</taxon>
        <taxon>Catarrhini</taxon>
        <taxon>Cercopithecidae</taxon>
        <taxon>Cercopithecinae</taxon>
        <taxon>Chlorocebus</taxon>
    </lineage>
</organism>
<proteinExistence type="inferred from homology"/>
<evidence type="ECO:0000250" key="1">
    <source>
        <dbReference type="UniProtKB" id="P02655"/>
    </source>
</evidence>
<evidence type="ECO:0000255" key="2"/>
<evidence type="ECO:0000305" key="3"/>
<accession>A0A0D9S1R9</accession>
<dbReference type="EMBL" id="AQIB01135957">
    <property type="status" value="NOT_ANNOTATED_CDS"/>
    <property type="molecule type" value="Genomic_DNA"/>
</dbReference>
<dbReference type="RefSeq" id="XP_007995350.1">
    <property type="nucleotide sequence ID" value="XM_007997159.1"/>
</dbReference>
<dbReference type="SMR" id="A0A0D9S1R9"/>
<dbReference type="STRING" id="60711.ENSCSAP00000014808"/>
<dbReference type="Ensembl" id="ENSCSAT00000001267.1">
    <property type="protein sequence ID" value="ENSCSAP00000014808.1"/>
    <property type="gene ID" value="ENSCSAG00000003240.1"/>
</dbReference>
<dbReference type="GeneID" id="103234843"/>
<dbReference type="KEGG" id="csab:103234843"/>
<dbReference type="CTD" id="344"/>
<dbReference type="eggNOG" id="ENOG502SEJB">
    <property type="taxonomic scope" value="Eukaryota"/>
</dbReference>
<dbReference type="GeneTree" id="ENSGT00390000007913"/>
<dbReference type="OMA" id="GTHEPQE"/>
<dbReference type="BioGRID-ORCS" id="103234843">
    <property type="hits" value="0 hits in 9 CRISPR screens"/>
</dbReference>
<dbReference type="Proteomes" id="UP000029965">
    <property type="component" value="Chromosome 6"/>
</dbReference>
<dbReference type="Bgee" id="ENSCSAG00000003240">
    <property type="expression patterns" value="Expressed in liver and 6 other cell types or tissues"/>
</dbReference>
<dbReference type="GO" id="GO:0042627">
    <property type="term" value="C:chylomicron"/>
    <property type="evidence" value="ECO:0007669"/>
    <property type="project" value="UniProtKB-KW"/>
</dbReference>
<dbReference type="GO" id="GO:0034363">
    <property type="term" value="C:intermediate-density lipoprotein particle"/>
    <property type="evidence" value="ECO:0007669"/>
    <property type="project" value="Ensembl"/>
</dbReference>
<dbReference type="GO" id="GO:0034362">
    <property type="term" value="C:low-density lipoprotein particle"/>
    <property type="evidence" value="ECO:0007669"/>
    <property type="project" value="UniProtKB-KW"/>
</dbReference>
<dbReference type="GO" id="GO:0034366">
    <property type="term" value="C:spherical high-density lipoprotein particle"/>
    <property type="evidence" value="ECO:0007669"/>
    <property type="project" value="Ensembl"/>
</dbReference>
<dbReference type="GO" id="GO:0034361">
    <property type="term" value="C:very-low-density lipoprotein particle"/>
    <property type="evidence" value="ECO:0007669"/>
    <property type="project" value="UniProtKB-KW"/>
</dbReference>
<dbReference type="GO" id="GO:0055102">
    <property type="term" value="F:lipase inhibitor activity"/>
    <property type="evidence" value="ECO:0007669"/>
    <property type="project" value="Ensembl"/>
</dbReference>
<dbReference type="GO" id="GO:0008289">
    <property type="term" value="F:lipid binding"/>
    <property type="evidence" value="ECO:0007669"/>
    <property type="project" value="Ensembl"/>
</dbReference>
<dbReference type="GO" id="GO:0060230">
    <property type="term" value="F:lipoprotein lipase activator activity"/>
    <property type="evidence" value="ECO:0007669"/>
    <property type="project" value="Ensembl"/>
</dbReference>
<dbReference type="GO" id="GO:0016004">
    <property type="term" value="F:phospholipase activator activity"/>
    <property type="evidence" value="ECO:0007669"/>
    <property type="project" value="Ensembl"/>
</dbReference>
<dbReference type="GO" id="GO:0043274">
    <property type="term" value="F:phospholipase binding"/>
    <property type="evidence" value="ECO:0007669"/>
    <property type="project" value="Ensembl"/>
</dbReference>
<dbReference type="GO" id="GO:0033344">
    <property type="term" value="P:cholesterol efflux"/>
    <property type="evidence" value="ECO:0007669"/>
    <property type="project" value="Ensembl"/>
</dbReference>
<dbReference type="GO" id="GO:0034382">
    <property type="term" value="P:chylomicron remnant clearance"/>
    <property type="evidence" value="ECO:0007669"/>
    <property type="project" value="Ensembl"/>
</dbReference>
<dbReference type="GO" id="GO:0034371">
    <property type="term" value="P:chylomicron remodeling"/>
    <property type="evidence" value="ECO:0007669"/>
    <property type="project" value="Ensembl"/>
</dbReference>
<dbReference type="GO" id="GO:0034384">
    <property type="term" value="P:high-density lipoprotein particle clearance"/>
    <property type="evidence" value="ECO:0007669"/>
    <property type="project" value="Ensembl"/>
</dbReference>
<dbReference type="GO" id="GO:0016042">
    <property type="term" value="P:lipid catabolic process"/>
    <property type="evidence" value="ECO:0007669"/>
    <property type="project" value="UniProtKB-KW"/>
</dbReference>
<dbReference type="GO" id="GO:0032375">
    <property type="term" value="P:negative regulation of cholesterol transport"/>
    <property type="evidence" value="ECO:0007669"/>
    <property type="project" value="Ensembl"/>
</dbReference>
<dbReference type="GO" id="GO:0045833">
    <property type="term" value="P:negative regulation of lipid metabolic process"/>
    <property type="evidence" value="ECO:0007669"/>
    <property type="project" value="Ensembl"/>
</dbReference>
<dbReference type="GO" id="GO:0048261">
    <property type="term" value="P:negative regulation of receptor-mediated endocytosis"/>
    <property type="evidence" value="ECO:0007669"/>
    <property type="project" value="Ensembl"/>
</dbReference>
<dbReference type="GO" id="GO:0010916">
    <property type="term" value="P:negative regulation of very-low-density lipoprotein particle clearance"/>
    <property type="evidence" value="ECO:0007669"/>
    <property type="project" value="Ensembl"/>
</dbReference>
<dbReference type="GO" id="GO:0033700">
    <property type="term" value="P:phospholipid efflux"/>
    <property type="evidence" value="ECO:0007669"/>
    <property type="project" value="Ensembl"/>
</dbReference>
<dbReference type="GO" id="GO:0045723">
    <property type="term" value="P:positive regulation of fatty acid biosynthetic process"/>
    <property type="evidence" value="ECO:0007669"/>
    <property type="project" value="Ensembl"/>
</dbReference>
<dbReference type="GO" id="GO:0060697">
    <property type="term" value="P:positive regulation of phospholipid catabolic process"/>
    <property type="evidence" value="ECO:0007669"/>
    <property type="project" value="Ensembl"/>
</dbReference>
<dbReference type="GO" id="GO:0010898">
    <property type="term" value="P:positive regulation of triglyceride catabolic process"/>
    <property type="evidence" value="ECO:0007669"/>
    <property type="project" value="Ensembl"/>
</dbReference>
<dbReference type="GO" id="GO:0010902">
    <property type="term" value="P:positive regulation of very-low-density lipoprotein particle remodeling"/>
    <property type="evidence" value="ECO:0007669"/>
    <property type="project" value="Ensembl"/>
</dbReference>
<dbReference type="GO" id="GO:0070328">
    <property type="term" value="P:triglyceride homeostasis"/>
    <property type="evidence" value="ECO:0007669"/>
    <property type="project" value="Ensembl"/>
</dbReference>
<dbReference type="FunFam" id="1.10.1440.10:FF:000001">
    <property type="entry name" value="Apolipoprotein C-II"/>
    <property type="match status" value="1"/>
</dbReference>
<dbReference type="Gene3D" id="1.10.1440.10">
    <property type="entry name" value="Apolipoprotein C-II"/>
    <property type="match status" value="1"/>
</dbReference>
<dbReference type="InterPro" id="IPR008019">
    <property type="entry name" value="Apo-CII"/>
</dbReference>
<dbReference type="InterPro" id="IPR023121">
    <property type="entry name" value="ApoC-II_dom_sf"/>
</dbReference>
<dbReference type="PANTHER" id="PTHR16566">
    <property type="entry name" value="APOLIPOPROTEIN C-II"/>
    <property type="match status" value="1"/>
</dbReference>
<dbReference type="PANTHER" id="PTHR16566:SF0">
    <property type="entry name" value="APOLIPOPROTEIN C-II"/>
    <property type="match status" value="1"/>
</dbReference>
<dbReference type="Pfam" id="PF05355">
    <property type="entry name" value="Apo-CII"/>
    <property type="match status" value="1"/>
</dbReference>
<name>APOC2_CHLSB</name>
<protein>
    <recommendedName>
        <fullName>Apolipoprotein C-II</fullName>
        <shortName>Apo-CII</shortName>
        <shortName>ApoC-II</shortName>
    </recommendedName>
    <alternativeName>
        <fullName>Apolipoprotein C2</fullName>
    </alternativeName>
    <component>
        <recommendedName>
            <fullName>Proapolipoprotein C-II</fullName>
            <shortName>ProapoC-II</shortName>
        </recommendedName>
    </component>
</protein>
<sequence>MGTRFLLALCLVLLVLGFEVQGTQLPKQDEPPSPALLSQVQESLSSYWESAKAAAQKLYEKTYLPAVDEKLRDLYSKSTAAMSTYTGIFTDQVLSVLKGEE</sequence>
<keyword id="KW-0162">Chylomicron</keyword>
<keyword id="KW-0325">Glycoprotein</keyword>
<keyword id="KW-0345">HDL</keyword>
<keyword id="KW-0427">LDL</keyword>
<keyword id="KW-0442">Lipid degradation</keyword>
<keyword id="KW-0443">Lipid metabolism</keyword>
<keyword id="KW-0445">Lipid transport</keyword>
<keyword id="KW-1185">Reference proteome</keyword>
<keyword id="KW-0964">Secreted</keyword>
<keyword id="KW-0730">Sialic acid</keyword>
<keyword id="KW-0732">Signal</keyword>
<keyword id="KW-0813">Transport</keyword>
<keyword id="KW-0850">VLDL</keyword>